<organism>
    <name type="scientific">Arabidopsis thaliana</name>
    <name type="common">Mouse-ear cress</name>
    <dbReference type="NCBI Taxonomy" id="3702"/>
    <lineage>
        <taxon>Eukaryota</taxon>
        <taxon>Viridiplantae</taxon>
        <taxon>Streptophyta</taxon>
        <taxon>Embryophyta</taxon>
        <taxon>Tracheophyta</taxon>
        <taxon>Spermatophyta</taxon>
        <taxon>Magnoliopsida</taxon>
        <taxon>eudicotyledons</taxon>
        <taxon>Gunneridae</taxon>
        <taxon>Pentapetalae</taxon>
        <taxon>rosids</taxon>
        <taxon>malvids</taxon>
        <taxon>Brassicales</taxon>
        <taxon>Brassicaceae</taxon>
        <taxon>Camelineae</taxon>
        <taxon>Arabidopsis</taxon>
    </lineage>
</organism>
<name>MED7A_ARATH</name>
<comment type="function">
    <text>Component of the Mediator complex, a coactivator involved in the regulated transcription of nearly all RNA polymerase II-dependent genes. Mediator functions as a bridge to convey information from gene-specific regulatory proteins to the basal RNA polymerase II transcription machinery. The Mediator complex, having a compact conformation in its free form, is recruited to promoters by direct interactions with regulatory proteins and serves for the assembly of a functional pre-initiation complex with RNA polymerase II and the general transcription factors.</text>
</comment>
<comment type="subunit">
    <text evidence="2 3 4">Component of the Mediator complex (PubMed:17560376, PubMed:22021418). Interacts with MEE14/CBP1 (PubMed:26462908).</text>
</comment>
<comment type="interaction">
    <interactant intactId="EBI-1386173">
        <id>Q9LYW3</id>
    </interactant>
    <interactant intactId="EBI-1386187">
        <id>F4IXJ7</id>
        <label>MED6</label>
    </interactant>
    <organismsDiffer>false</organismsDiffer>
    <experiments>2</experiments>
</comment>
<comment type="subcellular location">
    <subcellularLocation>
        <location evidence="5">Nucleus</location>
    </subcellularLocation>
</comment>
<comment type="similarity">
    <text evidence="5">Belongs to the Mediator complex subunit 7 family.</text>
</comment>
<evidence type="ECO:0000255" key="1"/>
<evidence type="ECO:0000269" key="2">
    <source>
    </source>
</evidence>
<evidence type="ECO:0000269" key="3">
    <source>
    </source>
</evidence>
<evidence type="ECO:0000269" key="4">
    <source>
    </source>
</evidence>
<evidence type="ECO:0000305" key="5"/>
<keyword id="KW-0175">Coiled coil</keyword>
<keyword id="KW-0539">Nucleus</keyword>
<keyword id="KW-1185">Reference proteome</keyword>
<keyword id="KW-0804">Transcription</keyword>
<keyword id="KW-0805">Transcription regulation</keyword>
<proteinExistence type="evidence at protein level"/>
<gene>
    <name type="primary">MED7A</name>
    <name type="synonym">MED7_1</name>
    <name type="ordered locus">At5g03220</name>
    <name type="ORF">F15A17.250</name>
    <name type="ORF">F9G14.160</name>
</gene>
<dbReference type="EMBL" id="AB005240">
    <property type="protein sequence ID" value="BAB08382.1"/>
    <property type="molecule type" value="Genomic_DNA"/>
</dbReference>
<dbReference type="EMBL" id="AL163002">
    <property type="protein sequence ID" value="CAB86089.1"/>
    <property type="molecule type" value="Genomic_DNA"/>
</dbReference>
<dbReference type="EMBL" id="CP002688">
    <property type="protein sequence ID" value="AED90572.1"/>
    <property type="molecule type" value="Genomic_DNA"/>
</dbReference>
<dbReference type="EMBL" id="AK117518">
    <property type="protein sequence ID" value="BAC42181.1"/>
    <property type="molecule type" value="mRNA"/>
</dbReference>
<dbReference type="EMBL" id="AF324995">
    <property type="protein sequence ID" value="AAG40347.1"/>
    <property type="molecule type" value="mRNA"/>
</dbReference>
<dbReference type="EMBL" id="BT020299">
    <property type="protein sequence ID" value="AAV84520.1"/>
    <property type="molecule type" value="mRNA"/>
</dbReference>
<dbReference type="EMBL" id="AY088796">
    <property type="protein sequence ID" value="AAM67107.1"/>
    <property type="molecule type" value="mRNA"/>
</dbReference>
<dbReference type="PIR" id="T48343">
    <property type="entry name" value="T48343"/>
</dbReference>
<dbReference type="RefSeq" id="NP_195942.1">
    <property type="nucleotide sequence ID" value="NM_120400.3"/>
</dbReference>
<dbReference type="SMR" id="Q9LYW3"/>
<dbReference type="FunCoup" id="Q9LYW3">
    <property type="interactions" value="3816"/>
</dbReference>
<dbReference type="IntAct" id="Q9LYW3">
    <property type="interactions" value="8"/>
</dbReference>
<dbReference type="STRING" id="3702.Q9LYW3"/>
<dbReference type="PaxDb" id="3702-AT5G03220.1"/>
<dbReference type="ProteomicsDB" id="228825"/>
<dbReference type="EnsemblPlants" id="AT5G03220.1">
    <property type="protein sequence ID" value="AT5G03220.1"/>
    <property type="gene ID" value="AT5G03220"/>
</dbReference>
<dbReference type="GeneID" id="831902"/>
<dbReference type="Gramene" id="AT5G03220.1">
    <property type="protein sequence ID" value="AT5G03220.1"/>
    <property type="gene ID" value="AT5G03220"/>
</dbReference>
<dbReference type="KEGG" id="ath:AT5G03220"/>
<dbReference type="Araport" id="AT5G03220"/>
<dbReference type="TAIR" id="AT5G03220">
    <property type="gene designation" value="MED7A"/>
</dbReference>
<dbReference type="eggNOG" id="KOG0570">
    <property type="taxonomic scope" value="Eukaryota"/>
</dbReference>
<dbReference type="HOGENOM" id="CLU_065214_4_0_1"/>
<dbReference type="InParanoid" id="Q9LYW3"/>
<dbReference type="OMA" id="IHDSYSM"/>
<dbReference type="PhylomeDB" id="Q9LYW3"/>
<dbReference type="PRO" id="PR:Q9LYW3"/>
<dbReference type="Proteomes" id="UP000006548">
    <property type="component" value="Chromosome 5"/>
</dbReference>
<dbReference type="GO" id="GO:0016592">
    <property type="term" value="C:mediator complex"/>
    <property type="evidence" value="ECO:0000314"/>
    <property type="project" value="UniProtKB"/>
</dbReference>
<dbReference type="GO" id="GO:0003712">
    <property type="term" value="F:transcription coregulator activity"/>
    <property type="evidence" value="ECO:0007669"/>
    <property type="project" value="InterPro"/>
</dbReference>
<dbReference type="GO" id="GO:0009704">
    <property type="term" value="P:de-etiolation"/>
    <property type="evidence" value="ECO:0000315"/>
    <property type="project" value="TAIR"/>
</dbReference>
<dbReference type="GO" id="GO:0006357">
    <property type="term" value="P:regulation of transcription by RNA polymerase II"/>
    <property type="evidence" value="ECO:0007669"/>
    <property type="project" value="InterPro"/>
</dbReference>
<dbReference type="GO" id="GO:0051510">
    <property type="term" value="P:regulation of unidimensional cell growth"/>
    <property type="evidence" value="ECO:0000315"/>
    <property type="project" value="TAIR"/>
</dbReference>
<dbReference type="Gene3D" id="6.10.140.200">
    <property type="match status" value="1"/>
</dbReference>
<dbReference type="InterPro" id="IPR037212">
    <property type="entry name" value="Med7/Med21-like"/>
</dbReference>
<dbReference type="InterPro" id="IPR009244">
    <property type="entry name" value="Mediatior_Med7"/>
</dbReference>
<dbReference type="InterPro" id="IPR044888">
    <property type="entry name" value="Mediatior_Med7_sf"/>
</dbReference>
<dbReference type="PANTHER" id="PTHR21428">
    <property type="entry name" value="MEDIATOR OF RNA POLYMERASE II TRANSCRIPTION SUBUNIT 7"/>
    <property type="match status" value="1"/>
</dbReference>
<dbReference type="PANTHER" id="PTHR21428:SF11">
    <property type="entry name" value="MEDIATOR OF RNA POLYMERASE II TRANSCRIPTION SUBUNIT 7"/>
    <property type="match status" value="1"/>
</dbReference>
<dbReference type="Pfam" id="PF05983">
    <property type="entry name" value="Med7"/>
    <property type="match status" value="1"/>
</dbReference>
<dbReference type="SUPFAM" id="SSF140718">
    <property type="entry name" value="Mediator hinge subcomplex-like"/>
    <property type="match status" value="1"/>
</dbReference>
<accession>Q9LYW3</accession>
<accession>Q8L8V0</accession>
<reference key="1">
    <citation type="journal article" date="1997" name="DNA Res.">
        <title>Structural analysis of Arabidopsis thaliana chromosome 5. I. Sequence features of the 1.6 Mb regions covered by twenty physically assigned P1 clones.</title>
        <authorList>
            <person name="Sato S."/>
            <person name="Kotani H."/>
            <person name="Nakamura Y."/>
            <person name="Kaneko T."/>
            <person name="Asamizu E."/>
            <person name="Fukami M."/>
            <person name="Miyajima N."/>
            <person name="Tabata S."/>
        </authorList>
    </citation>
    <scope>NUCLEOTIDE SEQUENCE [LARGE SCALE GENOMIC DNA]</scope>
    <source>
        <strain>cv. Columbia</strain>
    </source>
</reference>
<reference key="2">
    <citation type="journal article" date="2000" name="Nature">
        <title>Sequence and analysis of chromosome 5 of the plant Arabidopsis thaliana.</title>
        <authorList>
            <person name="Tabata S."/>
            <person name="Kaneko T."/>
            <person name="Nakamura Y."/>
            <person name="Kotani H."/>
            <person name="Kato T."/>
            <person name="Asamizu E."/>
            <person name="Miyajima N."/>
            <person name="Sasamoto S."/>
            <person name="Kimura T."/>
            <person name="Hosouchi T."/>
            <person name="Kawashima K."/>
            <person name="Kohara M."/>
            <person name="Matsumoto M."/>
            <person name="Matsuno A."/>
            <person name="Muraki A."/>
            <person name="Nakayama S."/>
            <person name="Nakazaki N."/>
            <person name="Naruo K."/>
            <person name="Okumura S."/>
            <person name="Shinpo S."/>
            <person name="Takeuchi C."/>
            <person name="Wada T."/>
            <person name="Watanabe A."/>
            <person name="Yamada M."/>
            <person name="Yasuda M."/>
            <person name="Sato S."/>
            <person name="de la Bastide M."/>
            <person name="Huang E."/>
            <person name="Spiegel L."/>
            <person name="Gnoj L."/>
            <person name="O'Shaughnessy A."/>
            <person name="Preston R."/>
            <person name="Habermann K."/>
            <person name="Murray J."/>
            <person name="Johnson D."/>
            <person name="Rohlfing T."/>
            <person name="Nelson J."/>
            <person name="Stoneking T."/>
            <person name="Pepin K."/>
            <person name="Spieth J."/>
            <person name="Sekhon M."/>
            <person name="Armstrong J."/>
            <person name="Becker M."/>
            <person name="Belter E."/>
            <person name="Cordum H."/>
            <person name="Cordes M."/>
            <person name="Courtney L."/>
            <person name="Courtney W."/>
            <person name="Dante M."/>
            <person name="Du H."/>
            <person name="Edwards J."/>
            <person name="Fryman J."/>
            <person name="Haakensen B."/>
            <person name="Lamar E."/>
            <person name="Latreille P."/>
            <person name="Leonard S."/>
            <person name="Meyer R."/>
            <person name="Mulvaney E."/>
            <person name="Ozersky P."/>
            <person name="Riley A."/>
            <person name="Strowmatt C."/>
            <person name="Wagner-McPherson C."/>
            <person name="Wollam A."/>
            <person name="Yoakum M."/>
            <person name="Bell M."/>
            <person name="Dedhia N."/>
            <person name="Parnell L."/>
            <person name="Shah R."/>
            <person name="Rodriguez M."/>
            <person name="Hoon See L."/>
            <person name="Vil D."/>
            <person name="Baker J."/>
            <person name="Kirchoff K."/>
            <person name="Toth K."/>
            <person name="King L."/>
            <person name="Bahret A."/>
            <person name="Miller B."/>
            <person name="Marra M.A."/>
            <person name="Martienssen R."/>
            <person name="McCombie W.R."/>
            <person name="Wilson R.K."/>
            <person name="Murphy G."/>
            <person name="Bancroft I."/>
            <person name="Volckaert G."/>
            <person name="Wambutt R."/>
            <person name="Duesterhoeft A."/>
            <person name="Stiekema W."/>
            <person name="Pohl T."/>
            <person name="Entian K.-D."/>
            <person name="Terryn N."/>
            <person name="Hartley N."/>
            <person name="Bent E."/>
            <person name="Johnson S."/>
            <person name="Langham S.-A."/>
            <person name="McCullagh B."/>
            <person name="Robben J."/>
            <person name="Grymonprez B."/>
            <person name="Zimmermann W."/>
            <person name="Ramsperger U."/>
            <person name="Wedler H."/>
            <person name="Balke K."/>
            <person name="Wedler E."/>
            <person name="Peters S."/>
            <person name="van Staveren M."/>
            <person name="Dirkse W."/>
            <person name="Mooijman P."/>
            <person name="Klein Lankhorst R."/>
            <person name="Weitzenegger T."/>
            <person name="Bothe G."/>
            <person name="Rose M."/>
            <person name="Hauf J."/>
            <person name="Berneiser S."/>
            <person name="Hempel S."/>
            <person name="Feldpausch M."/>
            <person name="Lamberth S."/>
            <person name="Villarroel R."/>
            <person name="Gielen J."/>
            <person name="Ardiles W."/>
            <person name="Bents O."/>
            <person name="Lemcke K."/>
            <person name="Kolesov G."/>
            <person name="Mayer K.F.X."/>
            <person name="Rudd S."/>
            <person name="Schoof H."/>
            <person name="Schueller C."/>
            <person name="Zaccaria P."/>
            <person name="Mewes H.-W."/>
            <person name="Bevan M."/>
            <person name="Fransz P.F."/>
        </authorList>
    </citation>
    <scope>NUCLEOTIDE SEQUENCE [LARGE SCALE GENOMIC DNA]</scope>
    <source>
        <strain>cv. Columbia</strain>
    </source>
</reference>
<reference key="3">
    <citation type="journal article" date="2017" name="Plant J.">
        <title>Araport11: a complete reannotation of the Arabidopsis thaliana reference genome.</title>
        <authorList>
            <person name="Cheng C.Y."/>
            <person name="Krishnakumar V."/>
            <person name="Chan A.P."/>
            <person name="Thibaud-Nissen F."/>
            <person name="Schobel S."/>
            <person name="Town C.D."/>
        </authorList>
    </citation>
    <scope>GENOME REANNOTATION</scope>
    <source>
        <strain>cv. Columbia</strain>
    </source>
</reference>
<reference key="4">
    <citation type="journal article" date="2002" name="Science">
        <title>Functional annotation of a full-length Arabidopsis cDNA collection.</title>
        <authorList>
            <person name="Seki M."/>
            <person name="Narusaka M."/>
            <person name="Kamiya A."/>
            <person name="Ishida J."/>
            <person name="Satou M."/>
            <person name="Sakurai T."/>
            <person name="Nakajima M."/>
            <person name="Enju A."/>
            <person name="Akiyama K."/>
            <person name="Oono Y."/>
            <person name="Muramatsu M."/>
            <person name="Hayashizaki Y."/>
            <person name="Kawai J."/>
            <person name="Carninci P."/>
            <person name="Itoh M."/>
            <person name="Ishii Y."/>
            <person name="Arakawa T."/>
            <person name="Shibata K."/>
            <person name="Shinagawa A."/>
            <person name="Shinozaki K."/>
        </authorList>
    </citation>
    <scope>NUCLEOTIDE SEQUENCE [LARGE SCALE MRNA]</scope>
    <source>
        <strain>cv. Columbia</strain>
    </source>
</reference>
<reference key="5">
    <citation type="journal article" date="2003" name="Science">
        <title>Empirical analysis of transcriptional activity in the Arabidopsis genome.</title>
        <authorList>
            <person name="Yamada K."/>
            <person name="Lim J."/>
            <person name="Dale J.M."/>
            <person name="Chen H."/>
            <person name="Shinn P."/>
            <person name="Palm C.J."/>
            <person name="Southwick A.M."/>
            <person name="Wu H.C."/>
            <person name="Kim C.J."/>
            <person name="Nguyen M."/>
            <person name="Pham P.K."/>
            <person name="Cheuk R.F."/>
            <person name="Karlin-Newmann G."/>
            <person name="Liu S.X."/>
            <person name="Lam B."/>
            <person name="Sakano H."/>
            <person name="Wu T."/>
            <person name="Yu G."/>
            <person name="Miranda M."/>
            <person name="Quach H.L."/>
            <person name="Tripp M."/>
            <person name="Chang C.H."/>
            <person name="Lee J.M."/>
            <person name="Toriumi M.J."/>
            <person name="Chan M.M."/>
            <person name="Tang C.C."/>
            <person name="Onodera C.S."/>
            <person name="Deng J.M."/>
            <person name="Akiyama K."/>
            <person name="Ansari Y."/>
            <person name="Arakawa T."/>
            <person name="Banh J."/>
            <person name="Banno F."/>
            <person name="Bowser L."/>
            <person name="Brooks S.Y."/>
            <person name="Carninci P."/>
            <person name="Chao Q."/>
            <person name="Choy N."/>
            <person name="Enju A."/>
            <person name="Goldsmith A.D."/>
            <person name="Gurjal M."/>
            <person name="Hansen N.F."/>
            <person name="Hayashizaki Y."/>
            <person name="Johnson-Hopson C."/>
            <person name="Hsuan V.W."/>
            <person name="Iida K."/>
            <person name="Karnes M."/>
            <person name="Khan S."/>
            <person name="Koesema E."/>
            <person name="Ishida J."/>
            <person name="Jiang P.X."/>
            <person name="Jones T."/>
            <person name="Kawai J."/>
            <person name="Kamiya A."/>
            <person name="Meyers C."/>
            <person name="Nakajima M."/>
            <person name="Narusaka M."/>
            <person name="Seki M."/>
            <person name="Sakurai T."/>
            <person name="Satou M."/>
            <person name="Tamse R."/>
            <person name="Vaysberg M."/>
            <person name="Wallender E.K."/>
            <person name="Wong C."/>
            <person name="Yamamura Y."/>
            <person name="Yuan S."/>
            <person name="Shinozaki K."/>
            <person name="Davis R.W."/>
            <person name="Theologis A."/>
            <person name="Ecker J.R."/>
        </authorList>
    </citation>
    <scope>NUCLEOTIDE SEQUENCE [LARGE SCALE MRNA]</scope>
    <source>
        <strain>cv. Columbia</strain>
    </source>
</reference>
<reference key="6">
    <citation type="submission" date="2004-12" db="EMBL/GenBank/DDBJ databases">
        <title>Arabidopsis ORF clones.</title>
        <authorList>
            <person name="Cheuk R."/>
            <person name="Chen H."/>
            <person name="Kim C.J."/>
            <person name="Shinn P."/>
            <person name="Ecker J.R."/>
        </authorList>
    </citation>
    <scope>NUCLEOTIDE SEQUENCE [LARGE SCALE MRNA]</scope>
</reference>
<reference key="7">
    <citation type="submission" date="2002-03" db="EMBL/GenBank/DDBJ databases">
        <title>Full-length cDNA from Arabidopsis thaliana.</title>
        <authorList>
            <person name="Brover V.V."/>
            <person name="Troukhan M.E."/>
            <person name="Alexandrov N.A."/>
            <person name="Lu Y.-P."/>
            <person name="Flavell R.B."/>
            <person name="Feldmann K.A."/>
        </authorList>
    </citation>
    <scope>NUCLEOTIDE SEQUENCE [LARGE SCALE MRNA]</scope>
</reference>
<reference key="8">
    <citation type="journal article" date="2007" name="Mol. Cell">
        <title>Purification of a plant mediator from Arabidopsis thaliana identifies PFT1 as the Med25 subunit.</title>
        <authorList>
            <person name="Baeckstroem S."/>
            <person name="Elfving N."/>
            <person name="Nilsson R."/>
            <person name="Wingsle G."/>
            <person name="Bjoerklund S."/>
        </authorList>
    </citation>
    <scope>IDENTIFICATION BY MASS SPECTROMETRY</scope>
    <scope>SUBUNIT</scope>
    <scope>NOMENCLATURE</scope>
</reference>
<reference key="9">
    <citation type="journal article" date="2011" name="Plant Physiol.">
        <title>The Mediator complex in plants: structure, phylogeny, and expression profiling of representative genes in a dicot (Arabidopsis) and a monocot (rice) during reproduction and abiotic stress.</title>
        <authorList>
            <person name="Mathur S."/>
            <person name="Vyas S."/>
            <person name="Kapoor S."/>
            <person name="Tyagi A.K."/>
        </authorList>
    </citation>
    <scope>IDENTIFICATION</scope>
    <scope>SUBUNIT</scope>
    <scope>NOMENCLATURE</scope>
</reference>
<reference key="10">
    <citation type="journal article" date="2015" name="Plant Cell">
        <title>Arabidopsis CBP1 is a novel regulator of transcription initiation in central cell-mediated pollen tube guidance.</title>
        <authorList>
            <person name="Li H.J."/>
            <person name="Zhu S.S."/>
            <person name="Zhang M.X."/>
            <person name="Wang T."/>
            <person name="Liang L."/>
            <person name="Xue Y."/>
            <person name="Shi D.Q."/>
            <person name="Liu J."/>
            <person name="Yang W.C."/>
        </authorList>
    </citation>
    <scope>INTERACTION WITH ME14/CBP1</scope>
</reference>
<feature type="chain" id="PRO_0000418112" description="Mediator of RNA polymerase II transcription subunit 7a">
    <location>
        <begin position="1"/>
        <end position="168"/>
    </location>
</feature>
<feature type="coiled-coil region" evidence="1">
    <location>
        <begin position="64"/>
        <end position="92"/>
    </location>
</feature>
<feature type="coiled-coil region" evidence="1">
    <location>
        <begin position="132"/>
        <end position="166"/>
    </location>
</feature>
<feature type="sequence conflict" description="In Ref. 7; AAM67107." evidence="5" ref="7">
    <original>N</original>
    <variation>K</variation>
    <location>
        <position position="72"/>
    </location>
</feature>
<protein>
    <recommendedName>
        <fullName>Mediator of RNA polymerase II transcription subunit 7a</fullName>
    </recommendedName>
</protein>
<sequence>MATATYPPPPPYYRLYKDYSENPNSAPEPPPPIEGTYVCFGGNYTTEDVLPSLEEQGVPQLYPKDSNLDYKNELRSLNRELQLHILELADVLVDRPSQYAKRIGEISSIFKNLHHLLNSLRPHQARATLIHIMELQIQQRKQAVEDIKRRREEAQRLLKDAYLTLDGQ</sequence>